<dbReference type="EC" id="1.-.-.-" evidence="4"/>
<dbReference type="EMBL" id="CH476594">
    <property type="protein sequence ID" value="EAU38976.1"/>
    <property type="molecule type" value="Genomic_DNA"/>
</dbReference>
<dbReference type="RefSeq" id="XP_001210416.1">
    <property type="nucleotide sequence ID" value="XM_001210416.1"/>
</dbReference>
<dbReference type="STRING" id="341663.Q0D154"/>
<dbReference type="EnsemblFungi" id="EAU38976">
    <property type="protein sequence ID" value="EAU38976"/>
    <property type="gene ID" value="ATEG_00330"/>
</dbReference>
<dbReference type="GeneID" id="4355082"/>
<dbReference type="VEuPathDB" id="FungiDB:ATEG_00330"/>
<dbReference type="eggNOG" id="ENOG502SPHA">
    <property type="taxonomic scope" value="Eukaryota"/>
</dbReference>
<dbReference type="HOGENOM" id="CLU_115019_0_1_1"/>
<dbReference type="OrthoDB" id="3183782at2759"/>
<dbReference type="Proteomes" id="UP000007963">
    <property type="component" value="Unassembled WGS sequence"/>
</dbReference>
<dbReference type="GO" id="GO:0016491">
    <property type="term" value="F:oxidoreductase activity"/>
    <property type="evidence" value="ECO:0007669"/>
    <property type="project" value="UniProtKB-KW"/>
</dbReference>
<dbReference type="InterPro" id="IPR009799">
    <property type="entry name" value="EthD_dom"/>
</dbReference>
<dbReference type="Pfam" id="PF07110">
    <property type="entry name" value="EthD"/>
    <property type="match status" value="1"/>
</dbReference>
<reference key="1">
    <citation type="submission" date="2005-09" db="EMBL/GenBank/DDBJ databases">
        <title>Annotation of the Aspergillus terreus NIH2624 genome.</title>
        <authorList>
            <person name="Birren B.W."/>
            <person name="Lander E.S."/>
            <person name="Galagan J.E."/>
            <person name="Nusbaum C."/>
            <person name="Devon K."/>
            <person name="Henn M."/>
            <person name="Ma L.-J."/>
            <person name="Jaffe D.B."/>
            <person name="Butler J."/>
            <person name="Alvarez P."/>
            <person name="Gnerre S."/>
            <person name="Grabherr M."/>
            <person name="Kleber M."/>
            <person name="Mauceli E.W."/>
            <person name="Brockman W."/>
            <person name="Rounsley S."/>
            <person name="Young S.K."/>
            <person name="LaButti K."/>
            <person name="Pushparaj V."/>
            <person name="DeCaprio D."/>
            <person name="Crawford M."/>
            <person name="Koehrsen M."/>
            <person name="Engels R."/>
            <person name="Montgomery P."/>
            <person name="Pearson M."/>
            <person name="Howarth C."/>
            <person name="Larson L."/>
            <person name="Luoma S."/>
            <person name="White J."/>
            <person name="Alvarado L."/>
            <person name="Kodira C.D."/>
            <person name="Zeng Q."/>
            <person name="Oleary S."/>
            <person name="Yandava C."/>
            <person name="Denning D.W."/>
            <person name="Nierman W.C."/>
            <person name="Milne T."/>
            <person name="Madden K."/>
        </authorList>
    </citation>
    <scope>NUCLEOTIDE SEQUENCE [LARGE SCALE GENOMIC DNA]</scope>
    <source>
        <strain>NIH 2624 / FGSC A1156</strain>
    </source>
</reference>
<reference key="2">
    <citation type="journal article" date="2011" name="Chem. Biol.">
        <title>Multifactorial induction of an orphan PKS-NRPS gene cluster in Aspergillus terreus.</title>
        <authorList>
            <person name="Gressler M."/>
            <person name="Zaehle C."/>
            <person name="Scherlach K."/>
            <person name="Hertweck C."/>
            <person name="Brock M."/>
        </authorList>
    </citation>
    <scope>IDENTIFICATION IN THE ISOFLAVIPUCINE CLUSTER</scope>
    <scope>FUNCTION</scope>
    <scope>INDUCTION</scope>
</reference>
<accession>Q0D154</accession>
<evidence type="ECO:0000255" key="1"/>
<evidence type="ECO:0000269" key="2">
    <source>
    </source>
</evidence>
<evidence type="ECO:0000303" key="3">
    <source>
    </source>
</evidence>
<evidence type="ECO:0000305" key="4"/>
<sequence>MTQRLLRLSLAHYRKDSCTEESCHYFGTALHAKQAATLHAKHGTLQYYQVYSTQAARDALDAFRRSLGADWTIDQHDLTVELYIRDLQTLRNIAADPEFASFYHLEEPYLSRRHVVASLGWVEAYVEEGKVVNVTDEGSEYRPGFGEFVGSGGELEKALA</sequence>
<organism>
    <name type="scientific">Aspergillus terreus (strain NIH 2624 / FGSC A1156)</name>
    <dbReference type="NCBI Taxonomy" id="341663"/>
    <lineage>
        <taxon>Eukaryota</taxon>
        <taxon>Fungi</taxon>
        <taxon>Dikarya</taxon>
        <taxon>Ascomycota</taxon>
        <taxon>Pezizomycotina</taxon>
        <taxon>Eurotiomycetes</taxon>
        <taxon>Eurotiomycetidae</taxon>
        <taxon>Eurotiales</taxon>
        <taxon>Aspergillaceae</taxon>
        <taxon>Aspergillus</taxon>
        <taxon>Aspergillus subgen. Circumdati</taxon>
    </lineage>
</organism>
<protein>
    <recommendedName>
        <fullName evidence="4">Putative oxygenase ATEG_00330</fullName>
        <ecNumber evidence="4">1.-.-.-</ecNumber>
    </recommendedName>
    <alternativeName>
        <fullName evidence="3">Isoflavipucine biosynthesis cluster protein ATEG_00330</fullName>
    </alternativeName>
</protein>
<feature type="chain" id="PRO_0000439000" description="Putative oxygenase ATEG_00330">
    <location>
        <begin position="1"/>
        <end position="160"/>
    </location>
</feature>
<feature type="domain" description="EthD" evidence="1">
    <location>
        <begin position="24"/>
        <end position="100"/>
    </location>
</feature>
<keyword id="KW-0560">Oxidoreductase</keyword>
<keyword id="KW-1185">Reference proteome</keyword>
<comment type="function">
    <text evidence="2">Putative oxygenase; part of the gene cluster that mediates the biosynthesis of isoflavipucine (PubMed:21236704). The PKS part of the PKS-NRPS ATEG_00325 probably assembles a triketide from an acetyl starter and two malonyl-CoA extender units (PubMed:21236704). The poly-beta-keto intermediate would then be fused to the leucine unit by the NRPS part (PubMed:21236704). The resulting amide would be liberated from the PKS-NRPS through reductive release of the linear PKS-NRPS product from the enzyme complex (PubMed:21236704). Further steps in isoflapucine synthesis include a cyclization step, an oxidation step, a hydrolysis step involving a trans-amidation, and an additional oxidation step, leading to flavipucine (PubMed:21236704). Formation of isoflavipucine from flavipucine requires an unusual rearrangement (PubMed:21236704). Alternative rearrangement reactions could build up rubrobramide, representing a branching of flavipucine biosynthesis (PubMed:21236704). The enzymes involved in the post-PKS-NRPS steps have not been identified yet, but the putative oxygenases ATEG_003329 and ATEG_00330 encoded by the cluster could play a role (PubMed:21236704).</text>
</comment>
<comment type="induction">
    <text evidence="2">Expression is positively controlled by the cluster-specific regulator ATEG_00326 (PubMed:21236704).</text>
</comment>
<comment type="similarity">
    <text evidence="4">Belongs to the tpcK family.</text>
</comment>
<proteinExistence type="evidence at transcript level"/>
<gene>
    <name type="ORF">ATEG_00330</name>
</gene>
<name>AT330_ASPTN</name>